<dbReference type="EMBL" id="AE017262">
    <property type="protein sequence ID" value="AAT04946.1"/>
    <property type="molecule type" value="Genomic_DNA"/>
</dbReference>
<dbReference type="RefSeq" id="WP_003724569.1">
    <property type="nucleotide sequence ID" value="NC_002973.6"/>
</dbReference>
<dbReference type="KEGG" id="lmf:LMOf2365_2179"/>
<dbReference type="HOGENOM" id="CLU_033541_0_1_9"/>
<dbReference type="GO" id="GO:0005886">
    <property type="term" value="C:plasma membrane"/>
    <property type="evidence" value="ECO:0007669"/>
    <property type="project" value="UniProtKB-SubCell"/>
</dbReference>
<dbReference type="Gene3D" id="1.20.1530.20">
    <property type="match status" value="1"/>
</dbReference>
<dbReference type="InterPro" id="IPR038770">
    <property type="entry name" value="Na+/solute_symporter_sf"/>
</dbReference>
<dbReference type="InterPro" id="IPR018383">
    <property type="entry name" value="UPF0324_pro"/>
</dbReference>
<dbReference type="PANTHER" id="PTHR30106">
    <property type="entry name" value="INNER MEMBRANE PROTEIN YEIH-RELATED"/>
    <property type="match status" value="1"/>
</dbReference>
<dbReference type="PANTHER" id="PTHR30106:SF2">
    <property type="entry name" value="UPF0324 INNER MEMBRANE PROTEIN YEIH"/>
    <property type="match status" value="1"/>
</dbReference>
<dbReference type="Pfam" id="PF03601">
    <property type="entry name" value="Cons_hypoth698"/>
    <property type="match status" value="1"/>
</dbReference>
<sequence length="335" mass="35642">MSQILFKTKTFWYGIALTFCIATLSYFLAKLPFLMILGQLVTAILIGIIIRALFPVPEKWFTGIQFSNKVILRAGIILLGFRLNLVDIYHAGWRVFLIAALCLSFGITIVYFLAKLFGVDKKLAILVACGTGICGAAAVVAISPQVKADNNQTAVAATIIALLGTIFTVIYTLIYPILPLGPDGYGIFAGATLHEIAHVIAAADPGGSSAVDMAVIVKLTRVALLVPVCFVVAKMVNAGTKNRFSWAELPVPWFIFGFLATSAINSFGIIPTSVTDFLVICAYFLIAMSMGGLGLNVHLPSFGKMGGKPFAAALIGSVFLSAFGLALVLLFHLAG</sequence>
<organism>
    <name type="scientific">Listeria monocytogenes serotype 4b (strain F2365)</name>
    <dbReference type="NCBI Taxonomy" id="265669"/>
    <lineage>
        <taxon>Bacteria</taxon>
        <taxon>Bacillati</taxon>
        <taxon>Bacillota</taxon>
        <taxon>Bacilli</taxon>
        <taxon>Bacillales</taxon>
        <taxon>Listeriaceae</taxon>
        <taxon>Listeria</taxon>
    </lineage>
</organism>
<reference key="1">
    <citation type="journal article" date="2004" name="Nucleic Acids Res.">
        <title>Whole genome comparisons of serotype 4b and 1/2a strains of the food-borne pathogen Listeria monocytogenes reveal new insights into the core genome components of this species.</title>
        <authorList>
            <person name="Nelson K.E."/>
            <person name="Fouts D.E."/>
            <person name="Mongodin E.F."/>
            <person name="Ravel J."/>
            <person name="DeBoy R.T."/>
            <person name="Kolonay J.F."/>
            <person name="Rasko D.A."/>
            <person name="Angiuoli S.V."/>
            <person name="Gill S.R."/>
            <person name="Paulsen I.T."/>
            <person name="Peterson J.D."/>
            <person name="White O."/>
            <person name="Nelson W.C."/>
            <person name="Nierman W.C."/>
            <person name="Beanan M.J."/>
            <person name="Brinkac L.M."/>
            <person name="Daugherty S.C."/>
            <person name="Dodson R.J."/>
            <person name="Durkin A.S."/>
            <person name="Madupu R."/>
            <person name="Haft D.H."/>
            <person name="Selengut J."/>
            <person name="Van Aken S.E."/>
            <person name="Khouri H.M."/>
            <person name="Fedorova N."/>
            <person name="Forberger H.A."/>
            <person name="Tran B."/>
            <person name="Kathariou S."/>
            <person name="Wonderling L.D."/>
            <person name="Uhlich G.A."/>
            <person name="Bayles D.O."/>
            <person name="Luchansky J.B."/>
            <person name="Fraser C.M."/>
        </authorList>
    </citation>
    <scope>NUCLEOTIDE SEQUENCE [LARGE SCALE GENOMIC DNA]</scope>
    <source>
        <strain>F2365</strain>
    </source>
</reference>
<comment type="subcellular location">
    <subcellularLocation>
        <location evidence="2">Cell membrane</location>
        <topology evidence="2">Multi-pass membrane protein</topology>
    </subcellularLocation>
</comment>
<comment type="similarity">
    <text evidence="2">Belongs to the UPF0324 family.</text>
</comment>
<feature type="chain" id="PRO_0000157426" description="UPF0324 membrane protein LMOf2365_2179">
    <location>
        <begin position="1"/>
        <end position="335"/>
    </location>
</feature>
<feature type="transmembrane region" description="Helical" evidence="1">
    <location>
        <begin position="10"/>
        <end position="28"/>
    </location>
</feature>
<feature type="transmembrane region" description="Helical" evidence="1">
    <location>
        <begin position="33"/>
        <end position="55"/>
    </location>
</feature>
<feature type="transmembrane region" description="Helical" evidence="1">
    <location>
        <begin position="91"/>
        <end position="113"/>
    </location>
</feature>
<feature type="transmembrane region" description="Helical" evidence="1">
    <location>
        <begin position="123"/>
        <end position="142"/>
    </location>
</feature>
<feature type="transmembrane region" description="Helical" evidence="1">
    <location>
        <begin position="155"/>
        <end position="177"/>
    </location>
</feature>
<feature type="transmembrane region" description="Helical" evidence="1">
    <location>
        <begin position="251"/>
        <end position="270"/>
    </location>
</feature>
<feature type="transmembrane region" description="Helical" evidence="1">
    <location>
        <begin position="277"/>
        <end position="299"/>
    </location>
</feature>
<feature type="transmembrane region" description="Helical" evidence="1">
    <location>
        <begin position="309"/>
        <end position="331"/>
    </location>
</feature>
<evidence type="ECO:0000255" key="1"/>
<evidence type="ECO:0000305" key="2"/>
<name>Y2179_LISMF</name>
<keyword id="KW-1003">Cell membrane</keyword>
<keyword id="KW-0472">Membrane</keyword>
<keyword id="KW-0812">Transmembrane</keyword>
<keyword id="KW-1133">Transmembrane helix</keyword>
<proteinExistence type="inferred from homology"/>
<accession>Q71XL9</accession>
<gene>
    <name type="ordered locus">LMOf2365_2179</name>
</gene>
<protein>
    <recommendedName>
        <fullName>UPF0324 membrane protein LMOf2365_2179</fullName>
    </recommendedName>
</protein>